<protein>
    <recommendedName>
        <fullName evidence="1">Chaperonin GroEL</fullName>
        <ecNumber evidence="1">5.6.1.7</ecNumber>
    </recommendedName>
    <alternativeName>
        <fullName evidence="1">60 kDa chaperonin</fullName>
    </alternativeName>
    <alternativeName>
        <fullName evidence="1">Chaperonin-60</fullName>
        <shortName evidence="1">Cpn60</shortName>
    </alternativeName>
</protein>
<name>CH60_METPP</name>
<gene>
    <name evidence="1" type="primary">groEL</name>
    <name evidence="1" type="synonym">groL</name>
    <name type="ordered locus">Mpe_A0428</name>
</gene>
<keyword id="KW-0067">ATP-binding</keyword>
<keyword id="KW-0143">Chaperone</keyword>
<keyword id="KW-0963">Cytoplasm</keyword>
<keyword id="KW-0413">Isomerase</keyword>
<keyword id="KW-0547">Nucleotide-binding</keyword>
<keyword id="KW-1185">Reference proteome</keyword>
<sequence>MAAKDVVFGGEARARMVEGVNILANAVKVTLGPKGRNVVLERSFGAPTVTKDGVSVAKEIELKDKLQNMGAQMVKEVASKTSDNAGDGTTTATVLAQAIVREGMKYVAAGMNPMDLKRGIDKAVVSLVEQLKKQSKPTTTSKEIAQVGTISANSDDDVGQIIASAMDKVGKEGVITVEDGKSLNNELDVVEGMQFDRGYLSPYFINNPEKQSAVLDNPFVLLYDKKISNIRDLLPTLEQVAKSGRPLLIIAEEVEGEALATLVVNTIRGILKVVAVKAPGFGDRRKAMLEDIAILTGGKVIAEEVGLTLEKVTLADLGQAKRVEVGKENTTIIDGAGAAGDIEARVKQVRVQIEEATSDYDREKLQERVAKLAGGVAVIKVGAATEVEMKEKKARVEDALHATRAAVEEGIVAGGGVALLRAKQAAGAIKGDNADQDAGIKLILRAIEEPLRIIVTNAGDEASVVVNAVLAGKGNYGYNAANGTYGDMIEMGILDPTKVTRTALQNAASVAALMLTTEAMVAESPKDDAPAGGMPGGMGGMGGMGMDM</sequence>
<accession>A2SCV1</accession>
<proteinExistence type="inferred from homology"/>
<reference key="1">
    <citation type="journal article" date="2007" name="J. Bacteriol.">
        <title>Whole-genome analysis of the methyl tert-butyl ether-degrading beta-proteobacterium Methylibium petroleiphilum PM1.</title>
        <authorList>
            <person name="Kane S.R."/>
            <person name="Chakicherla A.Y."/>
            <person name="Chain P.S.G."/>
            <person name="Schmidt R."/>
            <person name="Shin M.W."/>
            <person name="Legler T.C."/>
            <person name="Scow K.M."/>
            <person name="Larimer F.W."/>
            <person name="Lucas S.M."/>
            <person name="Richardson P.M."/>
            <person name="Hristova K.R."/>
        </authorList>
    </citation>
    <scope>NUCLEOTIDE SEQUENCE [LARGE SCALE GENOMIC DNA]</scope>
    <source>
        <strain>ATCC BAA-1232 / LMG 22953 / PM1</strain>
    </source>
</reference>
<comment type="function">
    <text evidence="1">Together with its co-chaperonin GroES, plays an essential role in assisting protein folding. The GroEL-GroES system forms a nano-cage that allows encapsulation of the non-native substrate proteins and provides a physical environment optimized to promote and accelerate protein folding.</text>
</comment>
<comment type="catalytic activity">
    <reaction evidence="1">
        <text>ATP + H2O + a folded polypeptide = ADP + phosphate + an unfolded polypeptide.</text>
        <dbReference type="EC" id="5.6.1.7"/>
    </reaction>
</comment>
<comment type="subunit">
    <text evidence="1">Forms a cylinder of 14 subunits composed of two heptameric rings stacked back-to-back. Interacts with the co-chaperonin GroES.</text>
</comment>
<comment type="subcellular location">
    <subcellularLocation>
        <location evidence="1">Cytoplasm</location>
    </subcellularLocation>
</comment>
<comment type="similarity">
    <text evidence="1">Belongs to the chaperonin (HSP60) family.</text>
</comment>
<dbReference type="EC" id="5.6.1.7" evidence="1"/>
<dbReference type="EMBL" id="CP000555">
    <property type="protein sequence ID" value="ABM93390.1"/>
    <property type="molecule type" value="Genomic_DNA"/>
</dbReference>
<dbReference type="RefSeq" id="WP_011828028.1">
    <property type="nucleotide sequence ID" value="NC_008825.1"/>
</dbReference>
<dbReference type="SMR" id="A2SCV1"/>
<dbReference type="STRING" id="420662.Mpe_A0428"/>
<dbReference type="KEGG" id="mpt:Mpe_A0428"/>
<dbReference type="eggNOG" id="COG0459">
    <property type="taxonomic scope" value="Bacteria"/>
</dbReference>
<dbReference type="HOGENOM" id="CLU_016503_3_0_4"/>
<dbReference type="Proteomes" id="UP000000366">
    <property type="component" value="Chromosome"/>
</dbReference>
<dbReference type="GO" id="GO:0005737">
    <property type="term" value="C:cytoplasm"/>
    <property type="evidence" value="ECO:0007669"/>
    <property type="project" value="UniProtKB-SubCell"/>
</dbReference>
<dbReference type="GO" id="GO:0005524">
    <property type="term" value="F:ATP binding"/>
    <property type="evidence" value="ECO:0007669"/>
    <property type="project" value="UniProtKB-UniRule"/>
</dbReference>
<dbReference type="GO" id="GO:0140662">
    <property type="term" value="F:ATP-dependent protein folding chaperone"/>
    <property type="evidence" value="ECO:0007669"/>
    <property type="project" value="InterPro"/>
</dbReference>
<dbReference type="GO" id="GO:0016853">
    <property type="term" value="F:isomerase activity"/>
    <property type="evidence" value="ECO:0007669"/>
    <property type="project" value="UniProtKB-KW"/>
</dbReference>
<dbReference type="GO" id="GO:0051082">
    <property type="term" value="F:unfolded protein binding"/>
    <property type="evidence" value="ECO:0007669"/>
    <property type="project" value="UniProtKB-UniRule"/>
</dbReference>
<dbReference type="GO" id="GO:0042026">
    <property type="term" value="P:protein refolding"/>
    <property type="evidence" value="ECO:0007669"/>
    <property type="project" value="UniProtKB-UniRule"/>
</dbReference>
<dbReference type="CDD" id="cd03344">
    <property type="entry name" value="GroEL"/>
    <property type="match status" value="1"/>
</dbReference>
<dbReference type="FunFam" id="1.10.560.10:FF:000001">
    <property type="entry name" value="60 kDa chaperonin"/>
    <property type="match status" value="1"/>
</dbReference>
<dbReference type="FunFam" id="3.50.7.10:FF:000001">
    <property type="entry name" value="60 kDa chaperonin"/>
    <property type="match status" value="1"/>
</dbReference>
<dbReference type="Gene3D" id="3.50.7.10">
    <property type="entry name" value="GroEL"/>
    <property type="match status" value="1"/>
</dbReference>
<dbReference type="Gene3D" id="1.10.560.10">
    <property type="entry name" value="GroEL-like equatorial domain"/>
    <property type="match status" value="1"/>
</dbReference>
<dbReference type="Gene3D" id="3.30.260.10">
    <property type="entry name" value="TCP-1-like chaperonin intermediate domain"/>
    <property type="match status" value="1"/>
</dbReference>
<dbReference type="HAMAP" id="MF_00600">
    <property type="entry name" value="CH60"/>
    <property type="match status" value="1"/>
</dbReference>
<dbReference type="InterPro" id="IPR018370">
    <property type="entry name" value="Chaperonin_Cpn60_CS"/>
</dbReference>
<dbReference type="InterPro" id="IPR001844">
    <property type="entry name" value="Cpn60/GroEL"/>
</dbReference>
<dbReference type="InterPro" id="IPR002423">
    <property type="entry name" value="Cpn60/GroEL/TCP-1"/>
</dbReference>
<dbReference type="InterPro" id="IPR027409">
    <property type="entry name" value="GroEL-like_apical_dom_sf"/>
</dbReference>
<dbReference type="InterPro" id="IPR027413">
    <property type="entry name" value="GROEL-like_equatorial_sf"/>
</dbReference>
<dbReference type="InterPro" id="IPR027410">
    <property type="entry name" value="TCP-1-like_intermed_sf"/>
</dbReference>
<dbReference type="NCBIfam" id="TIGR02348">
    <property type="entry name" value="GroEL"/>
    <property type="match status" value="1"/>
</dbReference>
<dbReference type="NCBIfam" id="NF000592">
    <property type="entry name" value="PRK00013.1"/>
    <property type="match status" value="1"/>
</dbReference>
<dbReference type="NCBIfam" id="NF009487">
    <property type="entry name" value="PRK12849.1"/>
    <property type="match status" value="1"/>
</dbReference>
<dbReference type="NCBIfam" id="NF009488">
    <property type="entry name" value="PRK12850.1"/>
    <property type="match status" value="1"/>
</dbReference>
<dbReference type="NCBIfam" id="NF009489">
    <property type="entry name" value="PRK12851.1"/>
    <property type="match status" value="1"/>
</dbReference>
<dbReference type="PANTHER" id="PTHR45633">
    <property type="entry name" value="60 KDA HEAT SHOCK PROTEIN, MITOCHONDRIAL"/>
    <property type="match status" value="1"/>
</dbReference>
<dbReference type="Pfam" id="PF00118">
    <property type="entry name" value="Cpn60_TCP1"/>
    <property type="match status" value="1"/>
</dbReference>
<dbReference type="PRINTS" id="PR00298">
    <property type="entry name" value="CHAPERONIN60"/>
</dbReference>
<dbReference type="SUPFAM" id="SSF52029">
    <property type="entry name" value="GroEL apical domain-like"/>
    <property type="match status" value="1"/>
</dbReference>
<dbReference type="SUPFAM" id="SSF48592">
    <property type="entry name" value="GroEL equatorial domain-like"/>
    <property type="match status" value="1"/>
</dbReference>
<dbReference type="SUPFAM" id="SSF54849">
    <property type="entry name" value="GroEL-intermediate domain like"/>
    <property type="match status" value="1"/>
</dbReference>
<dbReference type="PROSITE" id="PS00296">
    <property type="entry name" value="CHAPERONINS_CPN60"/>
    <property type="match status" value="1"/>
</dbReference>
<evidence type="ECO:0000255" key="1">
    <source>
        <dbReference type="HAMAP-Rule" id="MF_00600"/>
    </source>
</evidence>
<organism>
    <name type="scientific">Methylibium petroleiphilum (strain ATCC BAA-1232 / LMG 22953 / PM1)</name>
    <dbReference type="NCBI Taxonomy" id="420662"/>
    <lineage>
        <taxon>Bacteria</taxon>
        <taxon>Pseudomonadati</taxon>
        <taxon>Pseudomonadota</taxon>
        <taxon>Betaproteobacteria</taxon>
        <taxon>Burkholderiales</taxon>
        <taxon>Sphaerotilaceae</taxon>
        <taxon>Methylibium</taxon>
    </lineage>
</organism>
<feature type="chain" id="PRO_1000025808" description="Chaperonin GroEL">
    <location>
        <begin position="1"/>
        <end position="548"/>
    </location>
</feature>
<feature type="binding site" evidence="1">
    <location>
        <begin position="30"/>
        <end position="33"/>
    </location>
    <ligand>
        <name>ATP</name>
        <dbReference type="ChEBI" id="CHEBI:30616"/>
    </ligand>
</feature>
<feature type="binding site" evidence="1">
    <location>
        <position position="51"/>
    </location>
    <ligand>
        <name>ATP</name>
        <dbReference type="ChEBI" id="CHEBI:30616"/>
    </ligand>
</feature>
<feature type="binding site" evidence="1">
    <location>
        <begin position="87"/>
        <end position="91"/>
    </location>
    <ligand>
        <name>ATP</name>
        <dbReference type="ChEBI" id="CHEBI:30616"/>
    </ligand>
</feature>
<feature type="binding site" evidence="1">
    <location>
        <position position="415"/>
    </location>
    <ligand>
        <name>ATP</name>
        <dbReference type="ChEBI" id="CHEBI:30616"/>
    </ligand>
</feature>
<feature type="binding site" evidence="1">
    <location>
        <begin position="479"/>
        <end position="481"/>
    </location>
    <ligand>
        <name>ATP</name>
        <dbReference type="ChEBI" id="CHEBI:30616"/>
    </ligand>
</feature>
<feature type="binding site" evidence="1">
    <location>
        <position position="495"/>
    </location>
    <ligand>
        <name>ATP</name>
        <dbReference type="ChEBI" id="CHEBI:30616"/>
    </ligand>
</feature>